<accession>A1JQN9</accession>
<evidence type="ECO:0000255" key="1">
    <source>
        <dbReference type="HAMAP-Rule" id="MF_01202"/>
    </source>
</evidence>
<gene>
    <name evidence="1" type="primary">dadA</name>
    <name type="ordered locus">YE2281</name>
</gene>
<name>DADA_YERE8</name>
<sequence>MRVVILGSGVVGVASAWYLAKDGHDVTVIDRQDGPAQETSAGNAGQISPGYAAPWAAPGVPLKAIKWMFQRHAPLAIHLDGSASQLRWMWQMLRNCDTSHYMINKSRMVRLAEYSRDCLKDLREDTGIQYEGRQGGTLQLFRTEQQFDNAAKDIAVLDDAGVPYSLLTADQLATVEPALAKVAHKLTGGLRLPNDETGDCKLFTERLAKMAEQAGVKFIFNRSVEKLLVDGDQIAGVLWGDDIIKADAYVVAFGAYSTALLAGLVSIPVYPLKGYSLTIPITNPAGAPYSTVLDETYKIAITRFDDRIRVGGMAEIVGFNTQLEQARRETLEMVVGDLYPDGGNISQATFWTGLRPMTPDGTPIVGRTSLKNLYLNTGHGTLGWTMACGSGQLLADIMSGRRPAILADDLSVSRYSADFRPLNVAPLHDAHPIR</sequence>
<keyword id="KW-0274">FAD</keyword>
<keyword id="KW-0285">Flavoprotein</keyword>
<keyword id="KW-0560">Oxidoreductase</keyword>
<organism>
    <name type="scientific">Yersinia enterocolitica serotype O:8 / biotype 1B (strain NCTC 13174 / 8081)</name>
    <dbReference type="NCBI Taxonomy" id="393305"/>
    <lineage>
        <taxon>Bacteria</taxon>
        <taxon>Pseudomonadati</taxon>
        <taxon>Pseudomonadota</taxon>
        <taxon>Gammaproteobacteria</taxon>
        <taxon>Enterobacterales</taxon>
        <taxon>Yersiniaceae</taxon>
        <taxon>Yersinia</taxon>
    </lineage>
</organism>
<reference key="1">
    <citation type="journal article" date="2006" name="PLoS Genet.">
        <title>The complete genome sequence and comparative genome analysis of the high pathogenicity Yersinia enterocolitica strain 8081.</title>
        <authorList>
            <person name="Thomson N.R."/>
            <person name="Howard S."/>
            <person name="Wren B.W."/>
            <person name="Holden M.T.G."/>
            <person name="Crossman L."/>
            <person name="Challis G.L."/>
            <person name="Churcher C."/>
            <person name="Mungall K."/>
            <person name="Brooks K."/>
            <person name="Chillingworth T."/>
            <person name="Feltwell T."/>
            <person name="Abdellah Z."/>
            <person name="Hauser H."/>
            <person name="Jagels K."/>
            <person name="Maddison M."/>
            <person name="Moule S."/>
            <person name="Sanders M."/>
            <person name="Whitehead S."/>
            <person name="Quail M.A."/>
            <person name="Dougan G."/>
            <person name="Parkhill J."/>
            <person name="Prentice M.B."/>
        </authorList>
    </citation>
    <scope>NUCLEOTIDE SEQUENCE [LARGE SCALE GENOMIC DNA]</scope>
    <source>
        <strain>NCTC 13174 / 8081</strain>
    </source>
</reference>
<dbReference type="EC" id="1.4.99.-" evidence="1"/>
<dbReference type="EMBL" id="AM286415">
    <property type="protein sequence ID" value="CAL12341.1"/>
    <property type="molecule type" value="Genomic_DNA"/>
</dbReference>
<dbReference type="RefSeq" id="WP_011816440.1">
    <property type="nucleotide sequence ID" value="NC_008800.1"/>
</dbReference>
<dbReference type="RefSeq" id="YP_001006509.1">
    <property type="nucleotide sequence ID" value="NC_008800.1"/>
</dbReference>
<dbReference type="SMR" id="A1JQN9"/>
<dbReference type="KEGG" id="yen:YE2281"/>
<dbReference type="PATRIC" id="fig|393305.7.peg.2443"/>
<dbReference type="eggNOG" id="COG0665">
    <property type="taxonomic scope" value="Bacteria"/>
</dbReference>
<dbReference type="HOGENOM" id="CLU_007884_9_2_6"/>
<dbReference type="OrthoDB" id="9805337at2"/>
<dbReference type="UniPathway" id="UPA00043">
    <property type="reaction ID" value="UER00498"/>
</dbReference>
<dbReference type="Proteomes" id="UP000000642">
    <property type="component" value="Chromosome"/>
</dbReference>
<dbReference type="GO" id="GO:0005737">
    <property type="term" value="C:cytoplasm"/>
    <property type="evidence" value="ECO:0007669"/>
    <property type="project" value="TreeGrafter"/>
</dbReference>
<dbReference type="GO" id="GO:0005886">
    <property type="term" value="C:plasma membrane"/>
    <property type="evidence" value="ECO:0007669"/>
    <property type="project" value="TreeGrafter"/>
</dbReference>
<dbReference type="GO" id="GO:0008718">
    <property type="term" value="F:D-amino-acid dehydrogenase activity"/>
    <property type="evidence" value="ECO:0007669"/>
    <property type="project" value="UniProtKB-UniRule"/>
</dbReference>
<dbReference type="GO" id="GO:0055130">
    <property type="term" value="P:D-alanine catabolic process"/>
    <property type="evidence" value="ECO:0007669"/>
    <property type="project" value="UniProtKB-UniPathway"/>
</dbReference>
<dbReference type="FunFam" id="3.50.50.60:FF:000020">
    <property type="entry name" value="D-amino acid dehydrogenase"/>
    <property type="match status" value="1"/>
</dbReference>
<dbReference type="Gene3D" id="3.30.9.10">
    <property type="entry name" value="D-Amino Acid Oxidase, subunit A, domain 2"/>
    <property type="match status" value="1"/>
</dbReference>
<dbReference type="Gene3D" id="3.50.50.60">
    <property type="entry name" value="FAD/NAD(P)-binding domain"/>
    <property type="match status" value="2"/>
</dbReference>
<dbReference type="HAMAP" id="MF_01202">
    <property type="entry name" value="DadA"/>
    <property type="match status" value="1"/>
</dbReference>
<dbReference type="InterPro" id="IPR023080">
    <property type="entry name" value="DadA"/>
</dbReference>
<dbReference type="InterPro" id="IPR006076">
    <property type="entry name" value="FAD-dep_OxRdtase"/>
</dbReference>
<dbReference type="InterPro" id="IPR036188">
    <property type="entry name" value="FAD/NAD-bd_sf"/>
</dbReference>
<dbReference type="NCBIfam" id="NF001933">
    <property type="entry name" value="PRK00711.1"/>
    <property type="match status" value="1"/>
</dbReference>
<dbReference type="PANTHER" id="PTHR13847:SF280">
    <property type="entry name" value="D-AMINO ACID DEHYDROGENASE"/>
    <property type="match status" value="1"/>
</dbReference>
<dbReference type="PANTHER" id="PTHR13847">
    <property type="entry name" value="SARCOSINE DEHYDROGENASE-RELATED"/>
    <property type="match status" value="1"/>
</dbReference>
<dbReference type="Pfam" id="PF01266">
    <property type="entry name" value="DAO"/>
    <property type="match status" value="1"/>
</dbReference>
<dbReference type="SUPFAM" id="SSF54373">
    <property type="entry name" value="FAD-linked reductases, C-terminal domain"/>
    <property type="match status" value="1"/>
</dbReference>
<dbReference type="SUPFAM" id="SSF51905">
    <property type="entry name" value="FAD/NAD(P)-binding domain"/>
    <property type="match status" value="1"/>
</dbReference>
<feature type="chain" id="PRO_1000066124" description="D-amino acid dehydrogenase">
    <location>
        <begin position="1"/>
        <end position="434"/>
    </location>
</feature>
<feature type="binding site" evidence="1">
    <location>
        <begin position="3"/>
        <end position="17"/>
    </location>
    <ligand>
        <name>FAD</name>
        <dbReference type="ChEBI" id="CHEBI:57692"/>
    </ligand>
</feature>
<protein>
    <recommendedName>
        <fullName evidence="1">D-amino acid dehydrogenase</fullName>
        <ecNumber evidence="1">1.4.99.-</ecNumber>
    </recommendedName>
</protein>
<comment type="function">
    <text evidence="1">Oxidative deamination of D-amino acids.</text>
</comment>
<comment type="catalytic activity">
    <reaction evidence="1">
        <text>a D-alpha-amino acid + A + H2O = a 2-oxocarboxylate + AH2 + NH4(+)</text>
        <dbReference type="Rhea" id="RHEA:18125"/>
        <dbReference type="ChEBI" id="CHEBI:13193"/>
        <dbReference type="ChEBI" id="CHEBI:15377"/>
        <dbReference type="ChEBI" id="CHEBI:17499"/>
        <dbReference type="ChEBI" id="CHEBI:28938"/>
        <dbReference type="ChEBI" id="CHEBI:35179"/>
        <dbReference type="ChEBI" id="CHEBI:59871"/>
    </reaction>
</comment>
<comment type="cofactor">
    <cofactor evidence="1">
        <name>FAD</name>
        <dbReference type="ChEBI" id="CHEBI:57692"/>
    </cofactor>
</comment>
<comment type="pathway">
    <text>Amino-acid degradation; D-alanine degradation; NH(3) and pyruvate from D-alanine: step 1/1.</text>
</comment>
<comment type="similarity">
    <text evidence="1">Belongs to the DadA oxidoreductase family.</text>
</comment>
<proteinExistence type="inferred from homology"/>